<reference key="1">
    <citation type="journal article" date="2011" name="J. Bacteriol.">
        <title>Genome of Ochrobactrum anthropi ATCC 49188 T, a versatile opportunistic pathogen and symbiont of several eukaryotic hosts.</title>
        <authorList>
            <person name="Chain P.S."/>
            <person name="Lang D.M."/>
            <person name="Comerci D.J."/>
            <person name="Malfatti S.A."/>
            <person name="Vergez L.M."/>
            <person name="Shin M."/>
            <person name="Ugalde R.A."/>
            <person name="Garcia E."/>
            <person name="Tolmasky M.E."/>
        </authorList>
    </citation>
    <scope>NUCLEOTIDE SEQUENCE [LARGE SCALE GENOMIC DNA]</scope>
    <source>
        <strain>ATCC 49188 / DSM 6882 / CCUG 24695 / JCM 21032 / LMG 3331 / NBRC 15819 / NCTC 12168 / Alc 37</strain>
    </source>
</reference>
<accession>A6WXR6</accession>
<organism>
    <name type="scientific">Brucella anthropi (strain ATCC 49188 / DSM 6882 / CCUG 24695 / JCM 21032 / LMG 3331 / NBRC 15819 / NCTC 12168 / Alc 37)</name>
    <name type="common">Ochrobactrum anthropi</name>
    <dbReference type="NCBI Taxonomy" id="439375"/>
    <lineage>
        <taxon>Bacteria</taxon>
        <taxon>Pseudomonadati</taxon>
        <taxon>Pseudomonadota</taxon>
        <taxon>Alphaproteobacteria</taxon>
        <taxon>Hyphomicrobiales</taxon>
        <taxon>Brucellaceae</taxon>
        <taxon>Brucella/Ochrobactrum group</taxon>
        <taxon>Brucella</taxon>
    </lineage>
</organism>
<name>RL21_BRUA4</name>
<sequence length="129" mass="13768">MFAVIKTGGKQYRVAANDLIKVEKVAGEAGDIVEFAEVLMVGSTIGAPTVAGAIVTAEVVEQGRARKVIAFKKRRRQNSKRTRGHRQELTTIRISEILTDGAKPSKKAAEKKAPKAAPKKAAAKAESAE</sequence>
<comment type="function">
    <text evidence="1">This protein binds to 23S rRNA in the presence of protein L20.</text>
</comment>
<comment type="subunit">
    <text evidence="1">Part of the 50S ribosomal subunit. Contacts protein L20.</text>
</comment>
<comment type="similarity">
    <text evidence="1">Belongs to the bacterial ribosomal protein bL21 family.</text>
</comment>
<feature type="chain" id="PRO_1000067865" description="Large ribosomal subunit protein bL21">
    <location>
        <begin position="1"/>
        <end position="129"/>
    </location>
</feature>
<feature type="region of interest" description="Disordered" evidence="2">
    <location>
        <begin position="100"/>
        <end position="129"/>
    </location>
</feature>
<protein>
    <recommendedName>
        <fullName evidence="1">Large ribosomal subunit protein bL21</fullName>
    </recommendedName>
    <alternativeName>
        <fullName evidence="3">50S ribosomal protein L21</fullName>
    </alternativeName>
</protein>
<dbReference type="EMBL" id="CP000758">
    <property type="protein sequence ID" value="ABS13770.1"/>
    <property type="molecule type" value="Genomic_DNA"/>
</dbReference>
<dbReference type="RefSeq" id="WP_010661521.1">
    <property type="nucleotide sequence ID" value="NC_009667.1"/>
</dbReference>
<dbReference type="SMR" id="A6WXR6"/>
<dbReference type="STRING" id="439375.Oant_1050"/>
<dbReference type="GeneID" id="61318454"/>
<dbReference type="KEGG" id="oan:Oant_1050"/>
<dbReference type="eggNOG" id="COG0261">
    <property type="taxonomic scope" value="Bacteria"/>
</dbReference>
<dbReference type="HOGENOM" id="CLU_061463_1_2_5"/>
<dbReference type="PhylomeDB" id="A6WXR6"/>
<dbReference type="Proteomes" id="UP000002301">
    <property type="component" value="Chromosome 1"/>
</dbReference>
<dbReference type="GO" id="GO:0005737">
    <property type="term" value="C:cytoplasm"/>
    <property type="evidence" value="ECO:0007669"/>
    <property type="project" value="UniProtKB-ARBA"/>
</dbReference>
<dbReference type="GO" id="GO:1990904">
    <property type="term" value="C:ribonucleoprotein complex"/>
    <property type="evidence" value="ECO:0007669"/>
    <property type="project" value="UniProtKB-KW"/>
</dbReference>
<dbReference type="GO" id="GO:0005840">
    <property type="term" value="C:ribosome"/>
    <property type="evidence" value="ECO:0007669"/>
    <property type="project" value="UniProtKB-KW"/>
</dbReference>
<dbReference type="GO" id="GO:0019843">
    <property type="term" value="F:rRNA binding"/>
    <property type="evidence" value="ECO:0007669"/>
    <property type="project" value="UniProtKB-UniRule"/>
</dbReference>
<dbReference type="GO" id="GO:0003735">
    <property type="term" value="F:structural constituent of ribosome"/>
    <property type="evidence" value="ECO:0007669"/>
    <property type="project" value="InterPro"/>
</dbReference>
<dbReference type="GO" id="GO:0006412">
    <property type="term" value="P:translation"/>
    <property type="evidence" value="ECO:0007669"/>
    <property type="project" value="UniProtKB-UniRule"/>
</dbReference>
<dbReference type="HAMAP" id="MF_01363">
    <property type="entry name" value="Ribosomal_bL21"/>
    <property type="match status" value="1"/>
</dbReference>
<dbReference type="InterPro" id="IPR028909">
    <property type="entry name" value="bL21-like"/>
</dbReference>
<dbReference type="InterPro" id="IPR036164">
    <property type="entry name" value="bL21-like_sf"/>
</dbReference>
<dbReference type="InterPro" id="IPR001787">
    <property type="entry name" value="Ribosomal_bL21"/>
</dbReference>
<dbReference type="NCBIfam" id="TIGR00061">
    <property type="entry name" value="L21"/>
    <property type="match status" value="1"/>
</dbReference>
<dbReference type="PANTHER" id="PTHR21349">
    <property type="entry name" value="50S RIBOSOMAL PROTEIN L21"/>
    <property type="match status" value="1"/>
</dbReference>
<dbReference type="PANTHER" id="PTHR21349:SF0">
    <property type="entry name" value="LARGE RIBOSOMAL SUBUNIT PROTEIN BL21M"/>
    <property type="match status" value="1"/>
</dbReference>
<dbReference type="Pfam" id="PF00829">
    <property type="entry name" value="Ribosomal_L21p"/>
    <property type="match status" value="1"/>
</dbReference>
<dbReference type="SUPFAM" id="SSF141091">
    <property type="entry name" value="L21p-like"/>
    <property type="match status" value="1"/>
</dbReference>
<keyword id="KW-1185">Reference proteome</keyword>
<keyword id="KW-0687">Ribonucleoprotein</keyword>
<keyword id="KW-0689">Ribosomal protein</keyword>
<keyword id="KW-0694">RNA-binding</keyword>
<keyword id="KW-0699">rRNA-binding</keyword>
<proteinExistence type="inferred from homology"/>
<gene>
    <name evidence="1" type="primary">rplU</name>
    <name type="ordered locus">Oant_1050</name>
</gene>
<evidence type="ECO:0000255" key="1">
    <source>
        <dbReference type="HAMAP-Rule" id="MF_01363"/>
    </source>
</evidence>
<evidence type="ECO:0000256" key="2">
    <source>
        <dbReference type="SAM" id="MobiDB-lite"/>
    </source>
</evidence>
<evidence type="ECO:0000305" key="3"/>